<organism>
    <name type="scientific">Bovine coronavirus (strain Quebec)</name>
    <name type="common">BCoV</name>
    <name type="synonym">BCV</name>
    <dbReference type="NCBI Taxonomy" id="11133"/>
    <lineage>
        <taxon>Viruses</taxon>
        <taxon>Riboviria</taxon>
        <taxon>Orthornavirae</taxon>
        <taxon>Pisuviricota</taxon>
        <taxon>Pisoniviricetes</taxon>
        <taxon>Nidovirales</taxon>
        <taxon>Cornidovirineae</taxon>
        <taxon>Coronaviridae</taxon>
        <taxon>Orthocoronavirinae</taxon>
        <taxon>Betacoronavirus</taxon>
        <taxon>Embecovirus</taxon>
        <taxon>Betacoronavirus 1</taxon>
    </lineage>
</organism>
<sequence length="207" mass="23054">MASLSGPISPTNLEMFKPGVEELNPSKLLLLSYHQEGMLYPTILGSLELLSFKKERSLNLQRDKVCLLHQESQLLKLRGTGTDTTDVLLKQPMATSVNCCHDGIFTILEQDRMPKTSMAPILTESSGSLVTRLMSIPRLTFSIGTQVAMRLFRLGFRLARYSLRVTILKAQEGLLLIPDLLHAHPVEPLVQDRVVEPILATEPLPLV</sequence>
<evidence type="ECO:0000250" key="1"/>
<evidence type="ECO:0000305" key="2"/>
<gene>
    <name type="primary">N</name>
    <name type="synonym">I</name>
    <name type="ORF">7b</name>
</gene>
<proteinExistence type="inferred from homology"/>
<reference key="1">
    <citation type="journal article" date="2001" name="Adv. Exp. Med. Biol.">
        <title>Full-length genomic sequence of bovine coronavirus (31 kb). Completion of the open reading frame 1a/1b sequences.</title>
        <authorList>
            <person name="Yoo D."/>
            <person name="Pei Y."/>
        </authorList>
    </citation>
    <scope>NUCLEOTIDE SEQUENCE [GENOMIC RNA]</scope>
</reference>
<comment type="function">
    <text evidence="1">Structural protein that is not essential for the viral replication either in tissue culture or in its natural host.</text>
</comment>
<comment type="subcellular location">
    <subcellularLocation>
        <location evidence="1">Virion</location>
    </subcellularLocation>
</comment>
<comment type="miscellaneous">
    <text>The gene encoding this protein is included within the N gene (alternative ORF).</text>
</comment>
<comment type="similarity">
    <text evidence="2">Belongs to the coronavirus I protein family.</text>
</comment>
<feature type="chain" id="PRO_0000284098" description="Protein I">
    <location>
        <begin position="1"/>
        <end position="207"/>
    </location>
</feature>
<name>IORF_CVBQ</name>
<dbReference type="EMBL" id="AF220295">
    <property type="protein sequence ID" value="AAL40407.1"/>
    <property type="molecule type" value="Genomic_RNA"/>
</dbReference>
<dbReference type="Proteomes" id="UP000008572">
    <property type="component" value="Genome"/>
</dbReference>
<dbReference type="GO" id="GO:0044423">
    <property type="term" value="C:virion component"/>
    <property type="evidence" value="ECO:0007669"/>
    <property type="project" value="UniProtKB-KW"/>
</dbReference>
<dbReference type="CDD" id="cd21662">
    <property type="entry name" value="embe-CoV_Protein-I_like"/>
    <property type="match status" value="1"/>
</dbReference>
<dbReference type="InterPro" id="IPR004876">
    <property type="entry name" value="Corona_nucI"/>
</dbReference>
<dbReference type="InterPro" id="IPR044311">
    <property type="entry name" value="N2-like_embe-CoV"/>
</dbReference>
<dbReference type="Pfam" id="PF03187">
    <property type="entry name" value="Corona_I"/>
    <property type="match status" value="1"/>
</dbReference>
<accession>Q77NC1</accession>
<organismHost>
    <name type="scientific">Bos taurus</name>
    <name type="common">Bovine</name>
    <dbReference type="NCBI Taxonomy" id="9913"/>
</organismHost>
<protein>
    <recommendedName>
        <fullName>Protein I</fullName>
    </recommendedName>
    <alternativeName>
        <fullName>Accessory protein N2</fullName>
    </alternativeName>
    <alternativeName>
        <fullName>N internal ORF protein</fullName>
        <shortName>IORF</shortName>
    </alternativeName>
    <alternativeName>
        <fullName>Protein in nucleocapsid ORF</fullName>
    </alternativeName>
</protein>
<keyword id="KW-0946">Virion</keyword>